<sequence>MSITGQPHVYKKDTIIRLKPLSLNSNNRSYVFSSSKGNIQNIINHLNNLNEIVGRSLLGIWKINSYFGLSKDPSESKSKNPSVFNTAKTIFKSGGVDYSSQLKEIKSLLEAQNTRIKSLENAIQSLDNKIEPEPLTKEEVKELKESINSIKEGLKNIIG</sequence>
<accession>Q00965</accession>
<reference key="1">
    <citation type="journal article" date="1992" name="Plant Physiol.">
        <title>Nucleotide sequence of cauliflower mosaic virus isolate NY8153.</title>
        <authorList>
            <person name="Chenault K.D."/>
            <person name="Steffens D.L."/>
            <person name="Melcher U.K."/>
        </authorList>
    </citation>
    <scope>NUCLEOTIDE SEQUENCE [GENOMIC DNA]</scope>
</reference>
<gene>
    <name type="ORF">ORF II</name>
</gene>
<comment type="function">
    <text>This protein is involved in virus transmission.</text>
</comment>
<comment type="similarity">
    <text evidence="1">Belongs to the caulimoviridae ORF II family.</text>
</comment>
<organism>
    <name type="scientific">Cauliflower mosaic virus (strain NY8153)</name>
    <name type="common">CaMV</name>
    <dbReference type="NCBI Taxonomy" id="31557"/>
    <lineage>
        <taxon>Viruses</taxon>
        <taxon>Riboviria</taxon>
        <taxon>Pararnavirae</taxon>
        <taxon>Artverviricota</taxon>
        <taxon>Revtraviricetes</taxon>
        <taxon>Ortervirales</taxon>
        <taxon>Caulimoviridae</taxon>
        <taxon>Caulimovirus</taxon>
        <taxon>Caulimovirus tessellobrassicae</taxon>
    </lineage>
</organism>
<evidence type="ECO:0000305" key="1"/>
<proteinExistence type="inferred from homology"/>
<dbReference type="EMBL" id="M90541">
    <property type="protein sequence ID" value="AAA46355.1"/>
    <property type="molecule type" value="Genomic_DNA"/>
</dbReference>
<dbReference type="SMR" id="Q00965"/>
<dbReference type="Proteomes" id="UP000008441">
    <property type="component" value="Genome"/>
</dbReference>
<dbReference type="InterPro" id="IPR004917">
    <property type="entry name" value="Caulimo_AT"/>
</dbReference>
<dbReference type="Pfam" id="PF03233">
    <property type="entry name" value="Cauli_AT"/>
    <property type="match status" value="1"/>
</dbReference>
<protein>
    <recommendedName>
        <fullName>Aphid transmission protein</fullName>
    </recommendedName>
    <alternativeName>
        <fullName>Atf</fullName>
    </alternativeName>
    <alternativeName>
        <fullName>Protein 2</fullName>
    </alternativeName>
</protein>
<organismHost>
    <name type="scientific">Arabidopsis thaliana</name>
    <name type="common">Mouse-ear cress</name>
    <dbReference type="NCBI Taxonomy" id="3702"/>
</organismHost>
<organismHost>
    <name type="scientific">Brassica</name>
    <dbReference type="NCBI Taxonomy" id="3705"/>
</organismHost>
<organismHost>
    <name type="scientific">Raphanus</name>
    <dbReference type="NCBI Taxonomy" id="3725"/>
</organismHost>
<feature type="chain" id="PRO_0000222070" description="Aphid transmission protein">
    <location>
        <begin position="1"/>
        <end position="159"/>
    </location>
</feature>
<name>VAT_CAMVN</name>